<accession>B8B7X6</accession>
<comment type="function">
    <text evidence="1">Catalyzes the oxidation of D-2-hydroxyglutarate to alpha-ketoglutarate.</text>
</comment>
<comment type="catalytic activity">
    <reaction>
        <text>(R)-2-hydroxyglutarate + A = 2-oxoglutarate + AH2</text>
        <dbReference type="Rhea" id="RHEA:38295"/>
        <dbReference type="ChEBI" id="CHEBI:13193"/>
        <dbReference type="ChEBI" id="CHEBI:15801"/>
        <dbReference type="ChEBI" id="CHEBI:16810"/>
        <dbReference type="ChEBI" id="CHEBI:17499"/>
        <dbReference type="EC" id="1.1.99.39"/>
    </reaction>
</comment>
<comment type="cofactor">
    <cofactor evidence="1">
        <name>FAD</name>
        <dbReference type="ChEBI" id="CHEBI:57692"/>
    </cofactor>
    <text evidence="1">Binds 1 FAD per monomer.</text>
</comment>
<comment type="subunit">
    <text evidence="1">Homodimer.</text>
</comment>
<comment type="subcellular location">
    <subcellularLocation>
        <location evidence="4">Mitochondrion</location>
    </subcellularLocation>
</comment>
<comment type="similarity">
    <text evidence="4">Belongs to the FAD-binding oxidoreductase/transferase type 4 family.</text>
</comment>
<gene>
    <name type="primary">D2HGDH</name>
    <name type="ORF">OsI_25178</name>
</gene>
<protein>
    <recommendedName>
        <fullName>Probable D-2-hydroxyglutarate dehydrogenase, mitochondrial</fullName>
        <ecNumber>1.1.99.39</ecNumber>
    </recommendedName>
</protein>
<proteinExistence type="inferred from homology"/>
<feature type="transit peptide" description="Mitochondrion" evidence="2">
    <location>
        <begin position="1"/>
        <end position="80"/>
    </location>
</feature>
<feature type="chain" id="PRO_0000393391" description="Probable D-2-hydroxyglutarate dehydrogenase, mitochondrial">
    <location>
        <begin position="81"/>
        <end position="559"/>
    </location>
</feature>
<feature type="domain" description="FAD-binding PCMH-type" evidence="3">
    <location>
        <begin position="131"/>
        <end position="310"/>
    </location>
</feature>
<dbReference type="EC" id="1.1.99.39"/>
<dbReference type="EMBL" id="CM000132">
    <property type="protein sequence ID" value="EEC81643.1"/>
    <property type="molecule type" value="Genomic_DNA"/>
</dbReference>
<dbReference type="SMR" id="B8B7X6"/>
<dbReference type="STRING" id="39946.B8B7X6"/>
<dbReference type="EnsemblPlants" id="BGIOSGA025294-TA">
    <property type="protein sequence ID" value="BGIOSGA025294-PA"/>
    <property type="gene ID" value="BGIOSGA025294"/>
</dbReference>
<dbReference type="EnsemblPlants" id="OsGoSa_07g0005500.02">
    <property type="protein sequence ID" value="OsGoSa_07g0005500.02"/>
    <property type="gene ID" value="OsGoSa_07g0005500"/>
</dbReference>
<dbReference type="EnsemblPlants" id="OsIR64_07g0006030.02">
    <property type="protein sequence ID" value="OsIR64_07g0006030.02"/>
    <property type="gene ID" value="OsIR64_07g0006030"/>
</dbReference>
<dbReference type="EnsemblPlants" id="OsKYG_07g0005460.01">
    <property type="protein sequence ID" value="OsKYG_07g0005460.01"/>
    <property type="gene ID" value="OsKYG_07g0005460"/>
</dbReference>
<dbReference type="EnsemblPlants" id="OsKYG_07g0005460.02">
    <property type="protein sequence ID" value="OsKYG_07g0005460.02"/>
    <property type="gene ID" value="OsKYG_07g0005460"/>
</dbReference>
<dbReference type="EnsemblPlants" id="OsLaMu_07g0005450.01">
    <property type="protein sequence ID" value="OsLaMu_07g0005450.01"/>
    <property type="gene ID" value="OsLaMu_07g0005450"/>
</dbReference>
<dbReference type="EnsemblPlants" id="OsLima_07g0005460.01">
    <property type="protein sequence ID" value="OsLima_07g0005460.01"/>
    <property type="gene ID" value="OsLima_07g0005460"/>
</dbReference>
<dbReference type="EnsemblPlants" id="OsMH63_07G005420_03">
    <property type="protein sequence ID" value="OsMH63_07G005420_03"/>
    <property type="gene ID" value="OsMH63_07G005420"/>
</dbReference>
<dbReference type="EnsemblPlants" id="OsPr106_07g0005500.01">
    <property type="protein sequence ID" value="OsPr106_07g0005500.01"/>
    <property type="gene ID" value="OsPr106_07g0005500"/>
</dbReference>
<dbReference type="EnsemblPlants" id="OsZS97_07G005470_01">
    <property type="protein sequence ID" value="OsZS97_07G005470_01"/>
    <property type="gene ID" value="OsZS97_07G005470"/>
</dbReference>
<dbReference type="Gramene" id="BGIOSGA025294-TA">
    <property type="protein sequence ID" value="BGIOSGA025294-PA"/>
    <property type="gene ID" value="BGIOSGA025294"/>
</dbReference>
<dbReference type="Gramene" id="OsGoSa_07g0005500.02">
    <property type="protein sequence ID" value="OsGoSa_07g0005500.02"/>
    <property type="gene ID" value="OsGoSa_07g0005500"/>
</dbReference>
<dbReference type="Gramene" id="OsIR64_07g0006030.02">
    <property type="protein sequence ID" value="OsIR64_07g0006030.02"/>
    <property type="gene ID" value="OsIR64_07g0006030"/>
</dbReference>
<dbReference type="Gramene" id="OsKYG_07g0005460.01">
    <property type="protein sequence ID" value="OsKYG_07g0005460.01"/>
    <property type="gene ID" value="OsKYG_07g0005460"/>
</dbReference>
<dbReference type="Gramene" id="OsKYG_07g0005460.02">
    <property type="protein sequence ID" value="OsKYG_07g0005460.02"/>
    <property type="gene ID" value="OsKYG_07g0005460"/>
</dbReference>
<dbReference type="Gramene" id="OsLaMu_07g0005450.01">
    <property type="protein sequence ID" value="OsLaMu_07g0005450.01"/>
    <property type="gene ID" value="OsLaMu_07g0005450"/>
</dbReference>
<dbReference type="Gramene" id="OsLima_07g0005460.01">
    <property type="protein sequence ID" value="OsLima_07g0005460.01"/>
    <property type="gene ID" value="OsLima_07g0005460"/>
</dbReference>
<dbReference type="Gramene" id="OsMH63_07G005420_03">
    <property type="protein sequence ID" value="OsMH63_07G005420_03"/>
    <property type="gene ID" value="OsMH63_07G005420"/>
</dbReference>
<dbReference type="Gramene" id="OsPr106_07g0005500.01">
    <property type="protein sequence ID" value="OsPr106_07g0005500.01"/>
    <property type="gene ID" value="OsPr106_07g0005500"/>
</dbReference>
<dbReference type="Gramene" id="OsZS97_07G005470_01">
    <property type="protein sequence ID" value="OsZS97_07G005470_01"/>
    <property type="gene ID" value="OsZS97_07G005470"/>
</dbReference>
<dbReference type="HOGENOM" id="CLU_017779_4_1_1"/>
<dbReference type="OMA" id="YNEDWMR"/>
<dbReference type="OrthoDB" id="4062651at2759"/>
<dbReference type="Proteomes" id="UP000007015">
    <property type="component" value="Chromosome 7"/>
</dbReference>
<dbReference type="GO" id="GO:0005739">
    <property type="term" value="C:mitochondrion"/>
    <property type="evidence" value="ECO:0007669"/>
    <property type="project" value="UniProtKB-SubCell"/>
</dbReference>
<dbReference type="GO" id="GO:0051990">
    <property type="term" value="F:(R)-2-hydroxyglutarate dehydrogenase activity"/>
    <property type="evidence" value="ECO:0007669"/>
    <property type="project" value="UniProtKB-EC"/>
</dbReference>
<dbReference type="GO" id="GO:0047545">
    <property type="term" value="F:2-hydroxyglutarate dehydrogenase activity"/>
    <property type="evidence" value="ECO:0007669"/>
    <property type="project" value="EnsemblPlants"/>
</dbReference>
<dbReference type="GO" id="GO:0071949">
    <property type="term" value="F:FAD binding"/>
    <property type="evidence" value="ECO:0007669"/>
    <property type="project" value="InterPro"/>
</dbReference>
<dbReference type="GO" id="GO:0010230">
    <property type="term" value="P:alternative respiration"/>
    <property type="evidence" value="ECO:0007669"/>
    <property type="project" value="EnsemblPlants"/>
</dbReference>
<dbReference type="GO" id="GO:0009853">
    <property type="term" value="P:photorespiration"/>
    <property type="evidence" value="ECO:0007669"/>
    <property type="project" value="EnsemblPlants"/>
</dbReference>
<dbReference type="FunFam" id="3.30.70.2190:FF:000001">
    <property type="entry name" value="D-2-hydroxyglutarate dehydrogenase mitochondrial"/>
    <property type="match status" value="1"/>
</dbReference>
<dbReference type="FunFam" id="3.30.70.2740:FF:000002">
    <property type="entry name" value="D-2-hydroxyglutarate dehydrogenase mitochondrial"/>
    <property type="match status" value="1"/>
</dbReference>
<dbReference type="FunFam" id="3.30.43.10:FF:000002">
    <property type="entry name" value="D-2-hydroxyglutarate dehydrogenase, mitochondrial"/>
    <property type="match status" value="1"/>
</dbReference>
<dbReference type="FunFam" id="3.30.465.10:FF:000001">
    <property type="entry name" value="D-2-hydroxyglutarate dehydrogenase, mitochondrial"/>
    <property type="match status" value="1"/>
</dbReference>
<dbReference type="FunFam" id="1.10.45.10:FF:000001">
    <property type="entry name" value="D-lactate dehydrogenase mitochondrial"/>
    <property type="match status" value="1"/>
</dbReference>
<dbReference type="Gene3D" id="3.30.465.10">
    <property type="match status" value="1"/>
</dbReference>
<dbReference type="Gene3D" id="3.30.70.2190">
    <property type="match status" value="1"/>
</dbReference>
<dbReference type="Gene3D" id="3.30.70.2740">
    <property type="match status" value="1"/>
</dbReference>
<dbReference type="Gene3D" id="3.30.43.10">
    <property type="entry name" value="Uridine Diphospho-n-acetylenolpyruvylglucosamine Reductase, domain 2"/>
    <property type="match status" value="1"/>
</dbReference>
<dbReference type="Gene3D" id="1.10.45.10">
    <property type="entry name" value="Vanillyl-alcohol Oxidase, Chain A, domain 4"/>
    <property type="match status" value="1"/>
</dbReference>
<dbReference type="InterPro" id="IPR004113">
    <property type="entry name" value="FAD-bd_oxidored_4_C"/>
</dbReference>
<dbReference type="InterPro" id="IPR016166">
    <property type="entry name" value="FAD-bd_PCMH"/>
</dbReference>
<dbReference type="InterPro" id="IPR036318">
    <property type="entry name" value="FAD-bd_PCMH-like_sf"/>
</dbReference>
<dbReference type="InterPro" id="IPR016167">
    <property type="entry name" value="FAD-bd_PCMH_sub1"/>
</dbReference>
<dbReference type="InterPro" id="IPR016169">
    <property type="entry name" value="FAD-bd_PCMH_sub2"/>
</dbReference>
<dbReference type="InterPro" id="IPR016164">
    <property type="entry name" value="FAD-linked_Oxase-like_C"/>
</dbReference>
<dbReference type="InterPro" id="IPR051264">
    <property type="entry name" value="FAD-oxidored/transferase_4"/>
</dbReference>
<dbReference type="InterPro" id="IPR006094">
    <property type="entry name" value="Oxid_FAD_bind_N"/>
</dbReference>
<dbReference type="InterPro" id="IPR016171">
    <property type="entry name" value="Vanillyl_alc_oxidase_C-sub2"/>
</dbReference>
<dbReference type="PANTHER" id="PTHR43716">
    <property type="entry name" value="D-2-HYDROXYGLUTARATE DEHYDROGENASE, MITOCHONDRIAL"/>
    <property type="match status" value="1"/>
</dbReference>
<dbReference type="PANTHER" id="PTHR43716:SF1">
    <property type="entry name" value="D-2-HYDROXYGLUTARATE DEHYDROGENASE, MITOCHONDRIAL"/>
    <property type="match status" value="1"/>
</dbReference>
<dbReference type="Pfam" id="PF02913">
    <property type="entry name" value="FAD-oxidase_C"/>
    <property type="match status" value="1"/>
</dbReference>
<dbReference type="Pfam" id="PF01565">
    <property type="entry name" value="FAD_binding_4"/>
    <property type="match status" value="1"/>
</dbReference>
<dbReference type="SUPFAM" id="SSF56176">
    <property type="entry name" value="FAD-binding/transporter-associated domain-like"/>
    <property type="match status" value="1"/>
</dbReference>
<dbReference type="SUPFAM" id="SSF55103">
    <property type="entry name" value="FAD-linked oxidases, C-terminal domain"/>
    <property type="match status" value="1"/>
</dbReference>
<dbReference type="PROSITE" id="PS51387">
    <property type="entry name" value="FAD_PCMH"/>
    <property type="match status" value="1"/>
</dbReference>
<reference key="1">
    <citation type="journal article" date="2005" name="PLoS Biol.">
        <title>The genomes of Oryza sativa: a history of duplications.</title>
        <authorList>
            <person name="Yu J."/>
            <person name="Wang J."/>
            <person name="Lin W."/>
            <person name="Li S."/>
            <person name="Li H."/>
            <person name="Zhou J."/>
            <person name="Ni P."/>
            <person name="Dong W."/>
            <person name="Hu S."/>
            <person name="Zeng C."/>
            <person name="Zhang J."/>
            <person name="Zhang Y."/>
            <person name="Li R."/>
            <person name="Xu Z."/>
            <person name="Li S."/>
            <person name="Li X."/>
            <person name="Zheng H."/>
            <person name="Cong L."/>
            <person name="Lin L."/>
            <person name="Yin J."/>
            <person name="Geng J."/>
            <person name="Li G."/>
            <person name="Shi J."/>
            <person name="Liu J."/>
            <person name="Lv H."/>
            <person name="Li J."/>
            <person name="Wang J."/>
            <person name="Deng Y."/>
            <person name="Ran L."/>
            <person name="Shi X."/>
            <person name="Wang X."/>
            <person name="Wu Q."/>
            <person name="Li C."/>
            <person name="Ren X."/>
            <person name="Wang J."/>
            <person name="Wang X."/>
            <person name="Li D."/>
            <person name="Liu D."/>
            <person name="Zhang X."/>
            <person name="Ji Z."/>
            <person name="Zhao W."/>
            <person name="Sun Y."/>
            <person name="Zhang Z."/>
            <person name="Bao J."/>
            <person name="Han Y."/>
            <person name="Dong L."/>
            <person name="Ji J."/>
            <person name="Chen P."/>
            <person name="Wu S."/>
            <person name="Liu J."/>
            <person name="Xiao Y."/>
            <person name="Bu D."/>
            <person name="Tan J."/>
            <person name="Yang L."/>
            <person name="Ye C."/>
            <person name="Zhang J."/>
            <person name="Xu J."/>
            <person name="Zhou Y."/>
            <person name="Yu Y."/>
            <person name="Zhang B."/>
            <person name="Zhuang S."/>
            <person name="Wei H."/>
            <person name="Liu B."/>
            <person name="Lei M."/>
            <person name="Yu H."/>
            <person name="Li Y."/>
            <person name="Xu H."/>
            <person name="Wei S."/>
            <person name="He X."/>
            <person name="Fang L."/>
            <person name="Zhang Z."/>
            <person name="Zhang Y."/>
            <person name="Huang X."/>
            <person name="Su Z."/>
            <person name="Tong W."/>
            <person name="Li J."/>
            <person name="Tong Z."/>
            <person name="Li S."/>
            <person name="Ye J."/>
            <person name="Wang L."/>
            <person name="Fang L."/>
            <person name="Lei T."/>
            <person name="Chen C.-S."/>
            <person name="Chen H.-C."/>
            <person name="Xu Z."/>
            <person name="Li H."/>
            <person name="Huang H."/>
            <person name="Zhang F."/>
            <person name="Xu H."/>
            <person name="Li N."/>
            <person name="Zhao C."/>
            <person name="Li S."/>
            <person name="Dong L."/>
            <person name="Huang Y."/>
            <person name="Li L."/>
            <person name="Xi Y."/>
            <person name="Qi Q."/>
            <person name="Li W."/>
            <person name="Zhang B."/>
            <person name="Hu W."/>
            <person name="Zhang Y."/>
            <person name="Tian X."/>
            <person name="Jiao Y."/>
            <person name="Liang X."/>
            <person name="Jin J."/>
            <person name="Gao L."/>
            <person name="Zheng W."/>
            <person name="Hao B."/>
            <person name="Liu S.-M."/>
            <person name="Wang W."/>
            <person name="Yuan L."/>
            <person name="Cao M."/>
            <person name="McDermott J."/>
            <person name="Samudrala R."/>
            <person name="Wang J."/>
            <person name="Wong G.K.-S."/>
            <person name="Yang H."/>
        </authorList>
    </citation>
    <scope>NUCLEOTIDE SEQUENCE [LARGE SCALE GENOMIC DNA]</scope>
    <source>
        <strain>cv. 93-11</strain>
    </source>
</reference>
<evidence type="ECO:0000250" key="1"/>
<evidence type="ECO:0000255" key="2"/>
<evidence type="ECO:0000255" key="3">
    <source>
        <dbReference type="PROSITE-ProRule" id="PRU00718"/>
    </source>
</evidence>
<evidence type="ECO:0000305" key="4"/>
<keyword id="KW-0274">FAD</keyword>
<keyword id="KW-0285">Flavoprotein</keyword>
<keyword id="KW-0496">Mitochondrion</keyword>
<keyword id="KW-0560">Oxidoreductase</keyword>
<keyword id="KW-1185">Reference proteome</keyword>
<keyword id="KW-0809">Transit peptide</keyword>
<name>D2HDH_ORYSI</name>
<sequence length="559" mass="61129">MARRAAAGLLRRHLGPLAAGETLQARGMYPKQYGAANHAFSRFYSIQGQQRSLYGFRTNVETDDTQQSARMNFEVQKRSFSSAAAHVQRNPAYSVLNSDDVSYFKSILGDSGVVQDEDRVSVANMDWMGKYKGSSQLLLLPKSTAEVSKILSYCNSRRLAVVPQGGNTGLVGGSVPVYDEVIISLGGMDKIITFDNVNGILTCEAGCVLENLSSYVENKGFIMPLDLGAKGSCHIGGNISTNAGGLRFIRYGSLHGSVLGLEVVLADGTVLDMLTTLRKDNTGYDLKHLFIGSEGSLGIVTKIAILTPAKLPSTNVAFLSCNDYISCQKLLLAARRSLGEILSAFEFMDRHCINLAMKYLEGVHNPLPVSPYNFYVLIETTGSDESYDKAKLEAFLLRSMEDGLVADGVIAQDISQASNFWRIREGISEASVKVGAVYKYDLSIPVEKLYDIVEEMRSRVGDMGQVLGYGHLGDGNLHLNILSTKYSDKMLAQIEPFVYEWTSKQRGSISAEHGLGLMKADKIHYSKSSEAVQLMTSIKKLLDPNSILNPYKVLPQSVL</sequence>
<organism>
    <name type="scientific">Oryza sativa subsp. indica</name>
    <name type="common">Rice</name>
    <dbReference type="NCBI Taxonomy" id="39946"/>
    <lineage>
        <taxon>Eukaryota</taxon>
        <taxon>Viridiplantae</taxon>
        <taxon>Streptophyta</taxon>
        <taxon>Embryophyta</taxon>
        <taxon>Tracheophyta</taxon>
        <taxon>Spermatophyta</taxon>
        <taxon>Magnoliopsida</taxon>
        <taxon>Liliopsida</taxon>
        <taxon>Poales</taxon>
        <taxon>Poaceae</taxon>
        <taxon>BOP clade</taxon>
        <taxon>Oryzoideae</taxon>
        <taxon>Oryzeae</taxon>
        <taxon>Oryzinae</taxon>
        <taxon>Oryza</taxon>
        <taxon>Oryza sativa</taxon>
    </lineage>
</organism>